<gene>
    <name type="primary">grlH</name>
    <name type="ORF">DDB_G0282459</name>
</gene>
<accession>Q54SH8</accession>
<evidence type="ECO:0000255" key="1"/>
<evidence type="ECO:0000256" key="2">
    <source>
        <dbReference type="SAM" id="MobiDB-lite"/>
    </source>
</evidence>
<evidence type="ECO:0000269" key="3">
    <source>
    </source>
</evidence>
<evidence type="ECO:0000269" key="4">
    <source>
    </source>
</evidence>
<evidence type="ECO:0000305" key="5"/>
<feature type="signal peptide" evidence="1">
    <location>
        <begin position="1"/>
        <end position="20"/>
    </location>
</feature>
<feature type="chain" id="PRO_0000370352" description="Metabotropic glutamate receptor-like protein H">
    <location>
        <begin position="21"/>
        <end position="764"/>
    </location>
</feature>
<feature type="topological domain" description="Extracellular" evidence="1">
    <location>
        <begin position="21"/>
        <end position="393"/>
    </location>
</feature>
<feature type="transmembrane region" description="Helical; Name=1" evidence="1">
    <location>
        <begin position="394"/>
        <end position="414"/>
    </location>
</feature>
<feature type="topological domain" description="Cytoplasmic" evidence="1">
    <location>
        <begin position="415"/>
        <end position="427"/>
    </location>
</feature>
<feature type="transmembrane region" description="Helical; Name=2" evidence="1">
    <location>
        <begin position="428"/>
        <end position="448"/>
    </location>
</feature>
<feature type="topological domain" description="Extracellular" evidence="1">
    <location>
        <begin position="449"/>
        <end position="464"/>
    </location>
</feature>
<feature type="transmembrane region" description="Helical; Name=3" evidence="1">
    <location>
        <begin position="465"/>
        <end position="485"/>
    </location>
</feature>
<feature type="topological domain" description="Cytoplasmic" evidence="1">
    <location>
        <begin position="486"/>
        <end position="500"/>
    </location>
</feature>
<feature type="transmembrane region" description="Helical; Name=4" evidence="1">
    <location>
        <begin position="501"/>
        <end position="521"/>
    </location>
</feature>
<feature type="topological domain" description="Extracellular" evidence="1">
    <location>
        <begin position="522"/>
        <end position="552"/>
    </location>
</feature>
<feature type="transmembrane region" description="Helical; Name=5" evidence="1">
    <location>
        <begin position="553"/>
        <end position="573"/>
    </location>
</feature>
<feature type="topological domain" description="Cytoplasmic" evidence="1">
    <location>
        <begin position="574"/>
        <end position="587"/>
    </location>
</feature>
<feature type="transmembrane region" description="Helical; Name=6" evidence="1">
    <location>
        <begin position="588"/>
        <end position="608"/>
    </location>
</feature>
<feature type="topological domain" description="Extracellular" evidence="1">
    <location>
        <begin position="609"/>
        <end position="617"/>
    </location>
</feature>
<feature type="transmembrane region" description="Helical; Name=7" evidence="1">
    <location>
        <begin position="618"/>
        <end position="638"/>
    </location>
</feature>
<feature type="topological domain" description="Cytoplasmic" evidence="1">
    <location>
        <begin position="639"/>
        <end position="764"/>
    </location>
</feature>
<feature type="region of interest" description="Disordered" evidence="2">
    <location>
        <begin position="664"/>
        <end position="764"/>
    </location>
</feature>
<feature type="compositionally biased region" description="Low complexity" evidence="2">
    <location>
        <begin position="671"/>
        <end position="690"/>
    </location>
</feature>
<feature type="compositionally biased region" description="Basic and acidic residues" evidence="2">
    <location>
        <begin position="707"/>
        <end position="719"/>
    </location>
</feature>
<feature type="compositionally biased region" description="Acidic residues" evidence="2">
    <location>
        <begin position="731"/>
        <end position="748"/>
    </location>
</feature>
<feature type="glycosylation site" description="N-linked (GlcNAc...) asparagine" evidence="1">
    <location>
        <position position="72"/>
    </location>
</feature>
<feature type="glycosylation site" description="N-linked (GlcNAc...) asparagine" evidence="1">
    <location>
        <position position="260"/>
    </location>
</feature>
<feature type="glycosylation site" description="N-linked (GlcNAc...) asparagine" evidence="1">
    <location>
        <position position="278"/>
    </location>
</feature>
<feature type="glycosylation site" description="N-linked (GlcNAc...) asparagine" evidence="1">
    <location>
        <position position="344"/>
    </location>
</feature>
<feature type="glycosylation site" description="N-linked (GlcNAc...) asparagine" evidence="1">
    <location>
        <position position="379"/>
    </location>
</feature>
<feature type="glycosylation site" description="N-linked (GlcNAc...) asparagine" evidence="1">
    <location>
        <position position="547"/>
    </location>
</feature>
<name>GRLH_DICDI</name>
<proteinExistence type="evidence at transcript level"/>
<protein>
    <recommendedName>
        <fullName>Metabotropic glutamate receptor-like protein H</fullName>
    </recommendedName>
</protein>
<reference key="1">
    <citation type="journal article" date="2005" name="Nature">
        <title>The genome of the social amoeba Dictyostelium discoideum.</title>
        <authorList>
            <person name="Eichinger L."/>
            <person name="Pachebat J.A."/>
            <person name="Gloeckner G."/>
            <person name="Rajandream M.A."/>
            <person name="Sucgang R."/>
            <person name="Berriman M."/>
            <person name="Song J."/>
            <person name="Olsen R."/>
            <person name="Szafranski K."/>
            <person name="Xu Q."/>
            <person name="Tunggal B."/>
            <person name="Kummerfeld S."/>
            <person name="Madera M."/>
            <person name="Konfortov B.A."/>
            <person name="Rivero F."/>
            <person name="Bankier A.T."/>
            <person name="Lehmann R."/>
            <person name="Hamlin N."/>
            <person name="Davies R."/>
            <person name="Gaudet P."/>
            <person name="Fey P."/>
            <person name="Pilcher K."/>
            <person name="Chen G."/>
            <person name="Saunders D."/>
            <person name="Sodergren E.J."/>
            <person name="Davis P."/>
            <person name="Kerhornou A."/>
            <person name="Nie X."/>
            <person name="Hall N."/>
            <person name="Anjard C."/>
            <person name="Hemphill L."/>
            <person name="Bason N."/>
            <person name="Farbrother P."/>
            <person name="Desany B."/>
            <person name="Just E."/>
            <person name="Morio T."/>
            <person name="Rost R."/>
            <person name="Churcher C.M."/>
            <person name="Cooper J."/>
            <person name="Haydock S."/>
            <person name="van Driessche N."/>
            <person name="Cronin A."/>
            <person name="Goodhead I."/>
            <person name="Muzny D.M."/>
            <person name="Mourier T."/>
            <person name="Pain A."/>
            <person name="Lu M."/>
            <person name="Harper D."/>
            <person name="Lindsay R."/>
            <person name="Hauser H."/>
            <person name="James K.D."/>
            <person name="Quiles M."/>
            <person name="Madan Babu M."/>
            <person name="Saito T."/>
            <person name="Buchrieser C."/>
            <person name="Wardroper A."/>
            <person name="Felder M."/>
            <person name="Thangavelu M."/>
            <person name="Johnson D."/>
            <person name="Knights A."/>
            <person name="Loulseged H."/>
            <person name="Mungall K.L."/>
            <person name="Oliver K."/>
            <person name="Price C."/>
            <person name="Quail M.A."/>
            <person name="Urushihara H."/>
            <person name="Hernandez J."/>
            <person name="Rabbinowitsch E."/>
            <person name="Steffen D."/>
            <person name="Sanders M."/>
            <person name="Ma J."/>
            <person name="Kohara Y."/>
            <person name="Sharp S."/>
            <person name="Simmonds M.N."/>
            <person name="Spiegler S."/>
            <person name="Tivey A."/>
            <person name="Sugano S."/>
            <person name="White B."/>
            <person name="Walker D."/>
            <person name="Woodward J.R."/>
            <person name="Winckler T."/>
            <person name="Tanaka Y."/>
            <person name="Shaulsky G."/>
            <person name="Schleicher M."/>
            <person name="Weinstock G.M."/>
            <person name="Rosenthal A."/>
            <person name="Cox E.C."/>
            <person name="Chisholm R.L."/>
            <person name="Gibbs R.A."/>
            <person name="Loomis W.F."/>
            <person name="Platzer M."/>
            <person name="Kay R.R."/>
            <person name="Williams J.G."/>
            <person name="Dear P.H."/>
            <person name="Noegel A.A."/>
            <person name="Barrell B.G."/>
            <person name="Kuspa A."/>
        </authorList>
    </citation>
    <scope>NUCLEOTIDE SEQUENCE [LARGE SCALE GENOMIC DNA]</scope>
    <source>
        <strain>AX4</strain>
    </source>
</reference>
<reference key="2">
    <citation type="journal article" date="2006" name="Eur. J. Cell Biol.">
        <title>The Dictyostelium repertoire of seven transmembrane domain receptors.</title>
        <authorList>
            <person name="Prabhu Y."/>
            <person name="Eichinger L."/>
        </authorList>
    </citation>
    <scope>NOMENCLATURE</scope>
</reference>
<reference key="3">
    <citation type="journal article" date="2007" name="BMC Dev. Biol.">
        <title>GrlJ, a Dictyostelium GABAB-like receptor with roles in post-aggregation development.</title>
        <authorList>
            <person name="Prabhu Y."/>
            <person name="Mueller R."/>
            <person name="Anjard C."/>
            <person name="Noegel A.A."/>
        </authorList>
    </citation>
    <scope>DEVELOPMENTAL STAGE</scope>
</reference>
<reference key="4">
    <citation type="journal article" date="2008" name="BMC Genomics">
        <title>Genome-wide transcriptional changes induced by phagocytosis or growth on bacteria in Dictyostelium.</title>
        <authorList>
            <person name="Sillo A."/>
            <person name="Bloomfield G."/>
            <person name="Balest A."/>
            <person name="Balbo A."/>
            <person name="Pergolizzi B."/>
            <person name="Peracino B."/>
            <person name="Skelton J."/>
            <person name="Ivens A."/>
            <person name="Bozzaro S."/>
        </authorList>
    </citation>
    <scope>INDUCTION [LARGE SCALE ANALYSIS]</scope>
</reference>
<sequence>MKNILKILILILICINKINCLDGDGKQFRMIMLLSANVNDMGFNNMMNQGRIGVSKNLQIEDSRLIVVDGENDTKALVEPILQNEDIDFVICSSQGHTVACKYFADKYLKHPTVKTQFLIRGSGSSTANLIQFNYNFASCNYMSGYFAGLHTKTNKIGFLSPGAPKVNDAWVYAFWLGAKQVNPKIQFFYYNVGAFLNPDASERATNDLLERGCDVIGNTLDDFSSGITIMSKGYRTIGTNGFPQKLIYGEKILYSYAYNWTKLFLPIAMSVKAGITNNTNGYGDFNLDESKNFFNIEYSYGVSTDTINRMNQQITFLKSNSRFTHPYYCNEYLPEYTKKNNLNLSTSPTVNNLICIDHSTFLKINPPFPGMTYLGIYNISLVEVEFSQSIQNGFSITTGILIGITILMMIGIIKYSKTPSMRSASPIFLNFILAGGIIVYIGIIVWVGPMSTHSCNARLWLVTLGFSTLIGSLVVKNFRIWLIFDNPELKSIKITNYQLFPWVGACLVINIILMAILTSVGDLKQIDAMNIDSLGKYEYMKVCKMNSSGASTLYTILAYFAALLLVGVFVSWKIRIVDILEFNESGAIANTLYAISFCLFVIVPLMISPQDMQSETIILCTTGLFITTAALLIIFIPKFWRVFRKGANDSEINFNKKKSSSVATARAESGSKGSNGNASSGNRTNRRGNVVSGDFTDDSESSVGDENQKEKEKIKDDVANVTSGAVLAEFTDEASDTDNNEFNDIELSEQPPSIIVNDSENNN</sequence>
<dbReference type="EMBL" id="AAFI02000047">
    <property type="protein sequence ID" value="EAL66089.1"/>
    <property type="molecule type" value="Genomic_DNA"/>
</dbReference>
<dbReference type="RefSeq" id="XP_640061.1">
    <property type="nucleotide sequence ID" value="XM_634969.1"/>
</dbReference>
<dbReference type="SMR" id="Q54SH8"/>
<dbReference type="FunCoup" id="Q54SH8">
    <property type="interactions" value="19"/>
</dbReference>
<dbReference type="STRING" id="44689.Q54SH8"/>
<dbReference type="GlyCosmos" id="Q54SH8">
    <property type="glycosylation" value="6 sites, No reported glycans"/>
</dbReference>
<dbReference type="GlyGen" id="Q54SH8">
    <property type="glycosylation" value="6 sites"/>
</dbReference>
<dbReference type="PaxDb" id="44689-DDB0231982"/>
<dbReference type="EnsemblProtists" id="EAL66089">
    <property type="protein sequence ID" value="EAL66089"/>
    <property type="gene ID" value="DDB_G0282459"/>
</dbReference>
<dbReference type="GeneID" id="8623589"/>
<dbReference type="KEGG" id="ddi:DDB_G0282459"/>
<dbReference type="dictyBase" id="DDB_G0282459">
    <property type="gene designation" value="grlH"/>
</dbReference>
<dbReference type="VEuPathDB" id="AmoebaDB:DDB_G0282459"/>
<dbReference type="eggNOG" id="KOG1055">
    <property type="taxonomic scope" value="Eukaryota"/>
</dbReference>
<dbReference type="HOGENOM" id="CLU_365408_0_0_1"/>
<dbReference type="InParanoid" id="Q54SH8"/>
<dbReference type="OMA" id="INDANHS"/>
<dbReference type="PhylomeDB" id="Q54SH8"/>
<dbReference type="PRO" id="PR:Q54SH8"/>
<dbReference type="Proteomes" id="UP000002195">
    <property type="component" value="Chromosome 3"/>
</dbReference>
<dbReference type="GO" id="GO:0005886">
    <property type="term" value="C:plasma membrane"/>
    <property type="evidence" value="ECO:0000318"/>
    <property type="project" value="GO_Central"/>
</dbReference>
<dbReference type="GO" id="GO:0140985">
    <property type="term" value="F:G protein-coupled chemorepellent receptor activity"/>
    <property type="evidence" value="ECO:0000314"/>
    <property type="project" value="dictyBase"/>
</dbReference>
<dbReference type="GO" id="GO:0004930">
    <property type="term" value="F:G protein-coupled receptor activity"/>
    <property type="evidence" value="ECO:0000315"/>
    <property type="project" value="dictyBase"/>
</dbReference>
<dbReference type="GO" id="GO:0140986">
    <property type="term" value="P:G protein-coupled chemorepellent receptor signaling pathway"/>
    <property type="evidence" value="ECO:0000315"/>
    <property type="project" value="dictyBase"/>
</dbReference>
<dbReference type="GO" id="GO:0007186">
    <property type="term" value="P:G protein-coupled receptor signaling pathway"/>
    <property type="evidence" value="ECO:0000318"/>
    <property type="project" value="GO_Central"/>
</dbReference>
<dbReference type="GO" id="GO:0009617">
    <property type="term" value="P:response to bacterium"/>
    <property type="evidence" value="ECO:0000314"/>
    <property type="project" value="dictyBase"/>
</dbReference>
<dbReference type="CDD" id="cd15047">
    <property type="entry name" value="7tmC_GABA-B-like"/>
    <property type="match status" value="1"/>
</dbReference>
<dbReference type="FunFam" id="3.40.50.2300:FF:000581">
    <property type="entry name" value="Metabotropic glutamate receptor-like protein D"/>
    <property type="match status" value="1"/>
</dbReference>
<dbReference type="Gene3D" id="3.40.50.2300">
    <property type="match status" value="2"/>
</dbReference>
<dbReference type="InterPro" id="IPR017978">
    <property type="entry name" value="GPCR_3_C"/>
</dbReference>
<dbReference type="InterPro" id="IPR051530">
    <property type="entry name" value="mGluR/GABA-B-like"/>
</dbReference>
<dbReference type="InterPro" id="IPR003760">
    <property type="entry name" value="PnrA-like"/>
</dbReference>
<dbReference type="PANTHER" id="PTHR46924:SF3">
    <property type="entry name" value="METABOTROPIC GLUTAMATE RECEPTOR-LIKE PROTEIN C-RELATED"/>
    <property type="match status" value="1"/>
</dbReference>
<dbReference type="PANTHER" id="PTHR46924">
    <property type="entry name" value="METABOTROPIC GLUTAMATE RECEPTOR-LIKE PROTEIN C-RELATED-RELATED"/>
    <property type="match status" value="1"/>
</dbReference>
<dbReference type="Pfam" id="PF00003">
    <property type="entry name" value="7tm_3"/>
    <property type="match status" value="1"/>
</dbReference>
<dbReference type="Pfam" id="PF02608">
    <property type="entry name" value="Bmp"/>
    <property type="match status" value="1"/>
</dbReference>
<dbReference type="PROSITE" id="PS50259">
    <property type="entry name" value="G_PROTEIN_RECEP_F3_4"/>
    <property type="match status" value="1"/>
</dbReference>
<keyword id="KW-0297">G-protein coupled receptor</keyword>
<keyword id="KW-0325">Glycoprotein</keyword>
<keyword id="KW-0472">Membrane</keyword>
<keyword id="KW-0675">Receptor</keyword>
<keyword id="KW-1185">Reference proteome</keyword>
<keyword id="KW-0732">Signal</keyword>
<keyword id="KW-0807">Transducer</keyword>
<keyword id="KW-0812">Transmembrane</keyword>
<keyword id="KW-1133">Transmembrane helix</keyword>
<organism>
    <name type="scientific">Dictyostelium discoideum</name>
    <name type="common">Social amoeba</name>
    <dbReference type="NCBI Taxonomy" id="44689"/>
    <lineage>
        <taxon>Eukaryota</taxon>
        <taxon>Amoebozoa</taxon>
        <taxon>Evosea</taxon>
        <taxon>Eumycetozoa</taxon>
        <taxon>Dictyostelia</taxon>
        <taxon>Dictyosteliales</taxon>
        <taxon>Dictyosteliaceae</taxon>
        <taxon>Dictyostelium</taxon>
    </lineage>
</organism>
<comment type="subcellular location">
    <subcellularLocation>
        <location evidence="5">Membrane</location>
        <topology evidence="5">Multi-pass membrane protein</topology>
    </subcellularLocation>
</comment>
<comment type="developmental stage">
    <text evidence="3">Increased levels found from the tight aggregation stage onward. Levels stayed high during late development. Clear expression at 24 hours when fruiting body formation is close to completion.</text>
</comment>
<comment type="induction">
    <text evidence="4">Down-regulated by phagocytic stimuli.</text>
</comment>
<comment type="similarity">
    <text evidence="5">In the N-terminal section; belongs to the BMP lipoprotein family.</text>
</comment>
<comment type="similarity">
    <text evidence="5">In the C-terminal section; belongs to the G-protein coupled receptor 3 family. GABA-B receptor subfamily.</text>
</comment>